<comment type="function">
    <text evidence="1">Part of the Rad50/Mre11 complex, which is involved in the early steps of DNA double-strand break (DSB) repair. The complex may facilitate opening of the processed DNA ends to aid in the recruitment of HerA and NurA. Mre11 binds to DSB ends and has both double-stranded 3'-5' exonuclease activity and single-stranded endonuclease activity.</text>
</comment>
<comment type="cofactor">
    <cofactor evidence="1">
        <name>Mn(2+)</name>
        <dbReference type="ChEBI" id="CHEBI:29035"/>
    </cofactor>
    <text evidence="1">Binds 2 manganese ions per subunit.</text>
</comment>
<comment type="activity regulation">
    <text evidence="1">Nuclease activity is regulated by Rad50.</text>
</comment>
<comment type="subunit">
    <text evidence="1 2">Homodimer. Forms a heterotetramer composed of two Mre11 subunits and two Rad50 subunits (By similarity). Interacts with HerA (PubMed:18243819).</text>
</comment>
<comment type="induction">
    <text evidence="2">Part of the nurA-rad50-mre11-herA operon, these genes are cotranscribed.</text>
</comment>
<comment type="similarity">
    <text evidence="1">Belongs to the MRE11/RAD32 family.</text>
</comment>
<evidence type="ECO:0000255" key="1">
    <source>
        <dbReference type="HAMAP-Rule" id="MF_02044"/>
    </source>
</evidence>
<evidence type="ECO:0000269" key="2">
    <source>
    </source>
</evidence>
<organism>
    <name type="scientific">Sulfurisphaera tokodaii (strain DSM 16993 / JCM 10545 / NBRC 100140 / 7)</name>
    <name type="common">Sulfolobus tokodaii</name>
    <dbReference type="NCBI Taxonomy" id="273063"/>
    <lineage>
        <taxon>Archaea</taxon>
        <taxon>Thermoproteota</taxon>
        <taxon>Thermoprotei</taxon>
        <taxon>Sulfolobales</taxon>
        <taxon>Sulfolobaceae</taxon>
        <taxon>Sulfurisphaera</taxon>
    </lineage>
</organism>
<sequence length="387" mass="44979">MSKTQILHISDTHLGKRQYNLDFREQDVYDTFSQLIDIAIKEHVDGIIHTGDLFDINDPPNKAEIVAIRELKRLKEAGIPFIVIAGDHDSPKKFTAIYPQKILEEFDLIKFLSKPDTPYKLGEITIYGISHVPNVAKERLKELLSRLKPENKKSILLLHQGLKEVLPYEGAWQIQIDDLPKAFSYYALGHFHTRRVFQLDGGRIIEIAGSPDILREEEIEGYEKEGKGATLIDFSGDIPTIQKINIDVRKQYVVTLNTNNLREEIRKLREKYDTNNEKKPIFHIILEGKSIPKNVLMKELQEINNFAPYWRIYKDNTKEKDEKDVKIDLPTDTTIENLIYNYLVKIANFSETEARMIVDIINRADEREYVKEELMKMIGVENDNKKN</sequence>
<feature type="chain" id="PRO_0000138700" description="DNA double-strand break repair protein Mre11">
    <location>
        <begin position="1"/>
        <end position="387"/>
    </location>
</feature>
<feature type="active site" description="Proton donor" evidence="1">
    <location>
        <position position="88"/>
    </location>
</feature>
<feature type="binding site" evidence="1">
    <location>
        <position position="11"/>
    </location>
    <ligand>
        <name>Mn(2+)</name>
        <dbReference type="ChEBI" id="CHEBI:29035"/>
        <label>1</label>
    </ligand>
</feature>
<feature type="binding site" evidence="1">
    <location>
        <position position="13"/>
    </location>
    <ligand>
        <name>Mn(2+)</name>
        <dbReference type="ChEBI" id="CHEBI:29035"/>
        <label>1</label>
    </ligand>
</feature>
<feature type="binding site" evidence="1">
    <location>
        <position position="52"/>
    </location>
    <ligand>
        <name>Mn(2+)</name>
        <dbReference type="ChEBI" id="CHEBI:29035"/>
        <label>1</label>
    </ligand>
</feature>
<feature type="binding site" evidence="1">
    <location>
        <position position="52"/>
    </location>
    <ligand>
        <name>Mn(2+)</name>
        <dbReference type="ChEBI" id="CHEBI:29035"/>
        <label>2</label>
    </ligand>
</feature>
<feature type="binding site" evidence="1">
    <location>
        <position position="87"/>
    </location>
    <ligand>
        <name>Mn(2+)</name>
        <dbReference type="ChEBI" id="CHEBI:29035"/>
        <label>2</label>
    </ligand>
</feature>
<feature type="binding site" evidence="1">
    <location>
        <position position="159"/>
    </location>
    <ligand>
        <name>Mn(2+)</name>
        <dbReference type="ChEBI" id="CHEBI:29035"/>
        <label>2</label>
    </ligand>
</feature>
<feature type="binding site" evidence="1">
    <location>
        <position position="190"/>
    </location>
    <ligand>
        <name>Mn(2+)</name>
        <dbReference type="ChEBI" id="CHEBI:29035"/>
        <label>2</label>
    </ligand>
</feature>
<feature type="binding site" evidence="1">
    <location>
        <position position="192"/>
    </location>
    <ligand>
        <name>Mn(2+)</name>
        <dbReference type="ChEBI" id="CHEBI:29035"/>
        <label>1</label>
    </ligand>
</feature>
<reference key="1">
    <citation type="journal article" date="2001" name="DNA Res.">
        <title>Complete genome sequence of an aerobic thermoacidophilic Crenarchaeon, Sulfolobus tokodaii strain7.</title>
        <authorList>
            <person name="Kawarabayasi Y."/>
            <person name="Hino Y."/>
            <person name="Horikawa H."/>
            <person name="Jin-no K."/>
            <person name="Takahashi M."/>
            <person name="Sekine M."/>
            <person name="Baba S."/>
            <person name="Ankai A."/>
            <person name="Kosugi H."/>
            <person name="Hosoyama A."/>
            <person name="Fukui S."/>
            <person name="Nagai Y."/>
            <person name="Nishijima K."/>
            <person name="Otsuka R."/>
            <person name="Nakazawa H."/>
            <person name="Takamiya M."/>
            <person name="Kato Y."/>
            <person name="Yoshizawa T."/>
            <person name="Tanaka T."/>
            <person name="Kudoh Y."/>
            <person name="Yamazaki J."/>
            <person name="Kushida N."/>
            <person name="Oguchi A."/>
            <person name="Aoki K."/>
            <person name="Masuda S."/>
            <person name="Yanagii M."/>
            <person name="Nishimura M."/>
            <person name="Yamagishi A."/>
            <person name="Oshima T."/>
            <person name="Kikuchi H."/>
        </authorList>
    </citation>
    <scope>NUCLEOTIDE SEQUENCE [LARGE SCALE GENOMIC DNA]</scope>
    <source>
        <strain>DSM 16993 / JCM 10545 / NBRC 100140 / 7</strain>
    </source>
</reference>
<reference key="2">
    <citation type="journal article" date="2008" name="DNA Repair">
        <title>Archaeal DNA helicase HerA interacts with Mre11 homologue and unwinds blunt-ended double-stranded DNA and recombination intermediates.</title>
        <authorList>
            <person name="Zhang S."/>
            <person name="Wei T."/>
            <person name="Hou G."/>
            <person name="Zhang C."/>
            <person name="Liang P."/>
            <person name="Ni J."/>
            <person name="Sheng D."/>
            <person name="Shen Y."/>
        </authorList>
    </citation>
    <scope>INTERACTION WITH HERA</scope>
    <scope>INDUCTION</scope>
</reference>
<accession>Q96YR6</accession>
<proteinExistence type="evidence at protein level"/>
<keyword id="KW-0227">DNA damage</keyword>
<keyword id="KW-0234">DNA repair</keyword>
<keyword id="KW-0255">Endonuclease</keyword>
<keyword id="KW-0269">Exonuclease</keyword>
<keyword id="KW-0378">Hydrolase</keyword>
<keyword id="KW-0464">Manganese</keyword>
<keyword id="KW-0479">Metal-binding</keyword>
<keyword id="KW-0540">Nuclease</keyword>
<keyword id="KW-1185">Reference proteome</keyword>
<dbReference type="EC" id="3.1.-.-" evidence="1"/>
<dbReference type="EMBL" id="BA000023">
    <property type="protein sequence ID" value="BAB67211.1"/>
    <property type="molecule type" value="Genomic_DNA"/>
</dbReference>
<dbReference type="RefSeq" id="WP_010980186.1">
    <property type="nucleotide sequence ID" value="NC_003106.2"/>
</dbReference>
<dbReference type="SMR" id="Q96YR6"/>
<dbReference type="STRING" id="273063.STK_21070"/>
<dbReference type="GeneID" id="1460179"/>
<dbReference type="KEGG" id="sto:STK_21070"/>
<dbReference type="PATRIC" id="fig|273063.9.peg.2399"/>
<dbReference type="eggNOG" id="arCOG00397">
    <property type="taxonomic scope" value="Archaea"/>
</dbReference>
<dbReference type="OrthoDB" id="11638at2157"/>
<dbReference type="Proteomes" id="UP000001015">
    <property type="component" value="Chromosome"/>
</dbReference>
<dbReference type="GO" id="GO:0008408">
    <property type="term" value="F:3'-5' exonuclease activity"/>
    <property type="evidence" value="ECO:0007669"/>
    <property type="project" value="UniProtKB-UniRule"/>
</dbReference>
<dbReference type="GO" id="GO:0045027">
    <property type="term" value="F:DNA end binding"/>
    <property type="evidence" value="ECO:0007669"/>
    <property type="project" value="UniProtKB-UniRule"/>
</dbReference>
<dbReference type="GO" id="GO:0004519">
    <property type="term" value="F:endonuclease activity"/>
    <property type="evidence" value="ECO:0007669"/>
    <property type="project" value="UniProtKB-UniRule"/>
</dbReference>
<dbReference type="GO" id="GO:0030145">
    <property type="term" value="F:manganese ion binding"/>
    <property type="evidence" value="ECO:0007669"/>
    <property type="project" value="UniProtKB-UniRule"/>
</dbReference>
<dbReference type="GO" id="GO:0000403">
    <property type="term" value="F:Y-form DNA binding"/>
    <property type="evidence" value="ECO:0007669"/>
    <property type="project" value="UniProtKB-UniRule"/>
</dbReference>
<dbReference type="GO" id="GO:0006302">
    <property type="term" value="P:double-strand break repair"/>
    <property type="evidence" value="ECO:0007669"/>
    <property type="project" value="UniProtKB-UniRule"/>
</dbReference>
<dbReference type="CDD" id="cd00840">
    <property type="entry name" value="MPP_Mre11_N"/>
    <property type="match status" value="1"/>
</dbReference>
<dbReference type="Gene3D" id="3.60.21.10">
    <property type="match status" value="1"/>
</dbReference>
<dbReference type="HAMAP" id="MF_02044">
    <property type="entry name" value="Mre11"/>
    <property type="match status" value="1"/>
</dbReference>
<dbReference type="InterPro" id="IPR004843">
    <property type="entry name" value="Calcineurin-like_PHP_ApaH"/>
</dbReference>
<dbReference type="InterPro" id="IPR050535">
    <property type="entry name" value="DNA_Repair-Maintenance_Comp"/>
</dbReference>
<dbReference type="InterPro" id="IPR053459">
    <property type="entry name" value="DSB_Repair_Mre11/Rad50"/>
</dbReference>
<dbReference type="InterPro" id="IPR029052">
    <property type="entry name" value="Metallo-depent_PP-like"/>
</dbReference>
<dbReference type="InterPro" id="IPR032885">
    <property type="entry name" value="Mre11_archaea-type"/>
</dbReference>
<dbReference type="InterPro" id="IPR041796">
    <property type="entry name" value="Mre11_N"/>
</dbReference>
<dbReference type="NCBIfam" id="NF041031">
    <property type="entry name" value="Mre11_Sulfo"/>
    <property type="match status" value="1"/>
</dbReference>
<dbReference type="PANTHER" id="PTHR30337">
    <property type="entry name" value="COMPONENT OF ATP-DEPENDENT DSDNA EXONUCLEASE"/>
    <property type="match status" value="1"/>
</dbReference>
<dbReference type="PANTHER" id="PTHR30337:SF0">
    <property type="entry name" value="NUCLEASE SBCCD SUBUNIT D"/>
    <property type="match status" value="1"/>
</dbReference>
<dbReference type="Pfam" id="PF00149">
    <property type="entry name" value="Metallophos"/>
    <property type="match status" value="1"/>
</dbReference>
<dbReference type="SUPFAM" id="SSF56300">
    <property type="entry name" value="Metallo-dependent phosphatases"/>
    <property type="match status" value="1"/>
</dbReference>
<name>MRE11_SULTO</name>
<gene>
    <name evidence="1" type="primary">mre11</name>
    <name type="ordered locus">STK_21070</name>
</gene>
<protein>
    <recommendedName>
        <fullName evidence="1">DNA double-strand break repair protein Mre11</fullName>
        <ecNumber evidence="1">3.1.-.-</ecNumber>
    </recommendedName>
</protein>